<evidence type="ECO:0000250" key="1">
    <source>
        <dbReference type="UniProtKB" id="P32324"/>
    </source>
</evidence>
<evidence type="ECO:0000255" key="2">
    <source>
        <dbReference type="PROSITE-ProRule" id="PRU01059"/>
    </source>
</evidence>
<organism>
    <name type="scientific">Meyerozyma guilliermondii (strain ATCC 6260 / CBS 566 / DSM 6381 / JCM 1539 / NBRC 10279 / NRRL Y-324)</name>
    <name type="common">Yeast</name>
    <name type="synonym">Candida guilliermondii</name>
    <dbReference type="NCBI Taxonomy" id="294746"/>
    <lineage>
        <taxon>Eukaryota</taxon>
        <taxon>Fungi</taxon>
        <taxon>Dikarya</taxon>
        <taxon>Ascomycota</taxon>
        <taxon>Saccharomycotina</taxon>
        <taxon>Pichiomycetes</taxon>
        <taxon>Debaryomycetaceae</taxon>
        <taxon>Meyerozyma</taxon>
    </lineage>
</organism>
<sequence length="842" mass="93184">MVAFTIEQIRDLMDKVANVRNMSVIAHVDHGKSTLTDSLVQRAGIISAGKAGEARFMDTRKDEQERGITIKSTAISLYASMDDDDVKEIKQKTDGNSFLINLIDSPGHVDFSSEVTAALRVTDGALVVVDTVEGVCVQTETVLRQALGERIKPVLVVNKVDRALLELQVSKEDLYQTFARTVESVNVIISTYVDPALGDAQVYPDKGTVAFGSGLHGWAFTVRQFALRYSKKFGVDRAKMMERLWGDSFFNPKTKKWTNKDKDADGKPLERAFNMFVLDPIFRLFAAIMNFKKDEIPTLLEKLEINLKNEEKELEGKALLKVVMRKFLPAADALLEMIVLHLPSPVTAQAYRAETLYEGPSDDEFCTAIRNCDPKADLMLYVSKMVPTSDKGRFYAFGRVFAGTVKAGQKIRIQGPNYTPGKKEDLFLKSIQRTVLMMGRNTEAIDDCPAGNIVGLVGVDQFLLKSGTITTNEAAHNMKVMKFSVSPVVEVAVEVKNANDLPKLVEGLKRLSKSDPCVKTYMSESGEHIVAGTGELHLEICLSDLQNDHAGIPLRISDPVVAYRETIQAESSMVALSKSPNKHNRIYVKAQPIDEEVSLDIENGIINPRDDFKARARILADKHGWDVAEARKIWCFGPDGNGPNLVVDQTKAVQYLNEIKDSVVAAFQWATKEGPIFGENVRSVRVNILDVTLHADAIHRGGGQIIPTMRRVTYASMLLAEPAIQEPVFLVEIQCPENAIGGIYSVLNKKRGQVVSEEQRPGTPLFTVKAYLPVNESFGFSGDLRQATGGQAFPQLVFDHWAVLSGDVTDPTSKPGIIAKAKRERQGLKPEVPGYEEYYDKL</sequence>
<protein>
    <recommendedName>
        <fullName>Elongation factor 2</fullName>
        <shortName>EF-2</shortName>
        <ecNumber evidence="1">3.6.5.-</ecNumber>
    </recommendedName>
</protein>
<gene>
    <name type="primary">EFT2</name>
    <name type="ORF">PGUG_02912</name>
</gene>
<feature type="chain" id="PRO_0000295030" description="Elongation factor 2">
    <location>
        <begin position="1"/>
        <end position="842"/>
    </location>
</feature>
<feature type="domain" description="tr-type G" evidence="2">
    <location>
        <begin position="17"/>
        <end position="346"/>
    </location>
</feature>
<feature type="binding site" evidence="1">
    <location>
        <begin position="26"/>
        <end position="33"/>
    </location>
    <ligand>
        <name>GTP</name>
        <dbReference type="ChEBI" id="CHEBI:37565"/>
    </ligand>
</feature>
<feature type="binding site" evidence="1">
    <location>
        <begin position="158"/>
        <end position="161"/>
    </location>
    <ligand>
        <name>GTP</name>
        <dbReference type="ChEBI" id="CHEBI:37565"/>
    </ligand>
</feature>
<feature type="binding site" evidence="1">
    <location>
        <begin position="213"/>
        <end position="215"/>
    </location>
    <ligand>
        <name>GTP</name>
        <dbReference type="ChEBI" id="CHEBI:37565"/>
    </ligand>
</feature>
<feature type="modified residue" description="Diphthamide" evidence="1">
    <location>
        <position position="699"/>
    </location>
</feature>
<accession>A5DI11</accession>
<accession>Q6JED1</accession>
<accession>Q6JED3</accession>
<accession>Q9P4S2</accession>
<reference key="1">
    <citation type="journal article" date="2009" name="Nature">
        <title>Evolution of pathogenicity and sexual reproduction in eight Candida genomes.</title>
        <authorList>
            <person name="Butler G."/>
            <person name="Rasmussen M.D."/>
            <person name="Lin M.F."/>
            <person name="Santos M.A.S."/>
            <person name="Sakthikumar S."/>
            <person name="Munro C.A."/>
            <person name="Rheinbay E."/>
            <person name="Grabherr M."/>
            <person name="Forche A."/>
            <person name="Reedy J.L."/>
            <person name="Agrafioti I."/>
            <person name="Arnaud M.B."/>
            <person name="Bates S."/>
            <person name="Brown A.J.P."/>
            <person name="Brunke S."/>
            <person name="Costanzo M.C."/>
            <person name="Fitzpatrick D.A."/>
            <person name="de Groot P.W.J."/>
            <person name="Harris D."/>
            <person name="Hoyer L.L."/>
            <person name="Hube B."/>
            <person name="Klis F.M."/>
            <person name="Kodira C."/>
            <person name="Lennard N."/>
            <person name="Logue M.E."/>
            <person name="Martin R."/>
            <person name="Neiman A.M."/>
            <person name="Nikolaou E."/>
            <person name="Quail M.A."/>
            <person name="Quinn J."/>
            <person name="Santos M.C."/>
            <person name="Schmitzberger F.F."/>
            <person name="Sherlock G."/>
            <person name="Shah P."/>
            <person name="Silverstein K.A.T."/>
            <person name="Skrzypek M.S."/>
            <person name="Soll D."/>
            <person name="Staggs R."/>
            <person name="Stansfield I."/>
            <person name="Stumpf M.P.H."/>
            <person name="Sudbery P.E."/>
            <person name="Srikantha T."/>
            <person name="Zeng Q."/>
            <person name="Berman J."/>
            <person name="Berriman M."/>
            <person name="Heitman J."/>
            <person name="Gow N.A.R."/>
            <person name="Lorenz M.C."/>
            <person name="Birren B.W."/>
            <person name="Kellis M."/>
            <person name="Cuomo C.A."/>
        </authorList>
    </citation>
    <scope>NUCLEOTIDE SEQUENCE [LARGE SCALE GENOMIC DNA]</scope>
    <source>
        <strain>ATCC 6260 / CBS 566 / DSM 6381 / JCM 1539 / NBRC 10279 / NRRL Y-324</strain>
    </source>
</reference>
<reference key="2">
    <citation type="journal article" date="2001" name="Microbiology">
        <title>Species-specific inhibition of fungal protein synthesis by sordarin: identification of a sordarin-specificity region in eukaryotic elongation factor 2.</title>
        <authorList>
            <person name="Shastry M."/>
            <person name="Nielsen J."/>
            <person name="Ku T."/>
            <person name="Hsu M.-J."/>
            <person name="Liberator P."/>
            <person name="Anderson J."/>
            <person name="Schmatz D."/>
            <person name="Justice M.C."/>
        </authorList>
    </citation>
    <scope>NUCLEOTIDE SEQUENCE [GENOMIC DNA] OF 472-579</scope>
</reference>
<reference key="3">
    <citation type="journal article" date="2004" name="J. Clin. Microbiol.">
        <title>Phylogeny and evolution of medical species of Candida and related taxa: a multigenic analysis.</title>
        <authorList>
            <person name="Diezmann S."/>
            <person name="Cox C.J."/>
            <person name="Schoenian G."/>
            <person name="Vilgalys R.J."/>
            <person name="Mitchell T.G."/>
        </authorList>
    </citation>
    <scope>NUCLEOTIDE SEQUENCE [GENOMIC DNA] OF 586-786</scope>
    <source>
        <strain>ATCC 46036 / CBS 2030 / IFO 10106 / NRRL Y-2075</strain>
        <strain>MMRL 1635</strain>
        <strain>MMRL 1636</strain>
        <strain>MMRL 1759</strain>
    </source>
</reference>
<comment type="function">
    <text evidence="1">Catalyzes the GTP-dependent ribosomal translocation step during translation elongation. During this step, the ribosome changes from the pre-translocational (PRE) to the post-translocational (POST) state as the newly formed A-site-bound peptidyl-tRNA and P-site-bound deacylated tRNA move to the P and E sites, respectively. Catalyzes the coordinated movement of the two tRNA molecules, the mRNA and conformational changes in the ribosome.</text>
</comment>
<comment type="catalytic activity">
    <reaction evidence="1">
        <text>GTP + H2O = GDP + phosphate + H(+)</text>
        <dbReference type="Rhea" id="RHEA:19669"/>
        <dbReference type="ChEBI" id="CHEBI:15377"/>
        <dbReference type="ChEBI" id="CHEBI:15378"/>
        <dbReference type="ChEBI" id="CHEBI:37565"/>
        <dbReference type="ChEBI" id="CHEBI:43474"/>
        <dbReference type="ChEBI" id="CHEBI:58189"/>
    </reaction>
    <physiologicalReaction direction="left-to-right" evidence="1">
        <dbReference type="Rhea" id="RHEA:19670"/>
    </physiologicalReaction>
</comment>
<comment type="pathway">
    <text>Protein biosynthesis; polypeptide chain elongation.</text>
</comment>
<comment type="subcellular location">
    <subcellularLocation>
        <location evidence="1">Cytoplasm</location>
    </subcellularLocation>
</comment>
<comment type="similarity">
    <text evidence="2">Belongs to the TRAFAC class translation factor GTPase superfamily. Classic translation factor GTPase family. EF-G/EF-2 subfamily.</text>
</comment>
<proteinExistence type="inferred from homology"/>
<keyword id="KW-0963">Cytoplasm</keyword>
<keyword id="KW-0251">Elongation factor</keyword>
<keyword id="KW-0342">GTP-binding</keyword>
<keyword id="KW-0378">Hydrolase</keyword>
<keyword id="KW-0547">Nucleotide-binding</keyword>
<keyword id="KW-0648">Protein biosynthesis</keyword>
<keyword id="KW-1185">Reference proteome</keyword>
<name>EF2_PICGU</name>
<dbReference type="EC" id="3.6.5.-" evidence="1"/>
<dbReference type="EMBL" id="CH408157">
    <property type="protein sequence ID" value="EDK38814.1"/>
    <property type="molecule type" value="Genomic_DNA"/>
</dbReference>
<dbReference type="EMBL" id="AF107288">
    <property type="protein sequence ID" value="AAF81926.1"/>
    <property type="molecule type" value="Genomic_DNA"/>
</dbReference>
<dbReference type="EMBL" id="AY497642">
    <property type="protein sequence ID" value="AAT12555.1"/>
    <property type="molecule type" value="Genomic_DNA"/>
</dbReference>
<dbReference type="EMBL" id="AY497661">
    <property type="protein sequence ID" value="AAT12573.1"/>
    <property type="molecule type" value="Genomic_DNA"/>
</dbReference>
<dbReference type="EMBL" id="AY497662">
    <property type="protein sequence ID" value="AAT12574.1"/>
    <property type="molecule type" value="Genomic_DNA"/>
</dbReference>
<dbReference type="EMBL" id="AY497663">
    <property type="protein sequence ID" value="AAT12575.1"/>
    <property type="molecule type" value="Genomic_DNA"/>
</dbReference>
<dbReference type="RefSeq" id="XP_001485183.1">
    <property type="nucleotide sequence ID" value="XM_001485133.1"/>
</dbReference>
<dbReference type="SMR" id="A5DI11"/>
<dbReference type="FunCoup" id="A5DI11">
    <property type="interactions" value="1213"/>
</dbReference>
<dbReference type="STRING" id="294746.A5DI11"/>
<dbReference type="GeneID" id="5126516"/>
<dbReference type="KEGG" id="pgu:PGUG_02912"/>
<dbReference type="VEuPathDB" id="FungiDB:PGUG_02912"/>
<dbReference type="eggNOG" id="KOG0469">
    <property type="taxonomic scope" value="Eukaryota"/>
</dbReference>
<dbReference type="HOGENOM" id="CLU_002794_11_2_1"/>
<dbReference type="InParanoid" id="A5DI11"/>
<dbReference type="OMA" id="ASWNTEN"/>
<dbReference type="OrthoDB" id="364892at2759"/>
<dbReference type="UniPathway" id="UPA00345"/>
<dbReference type="Proteomes" id="UP000001997">
    <property type="component" value="Unassembled WGS sequence"/>
</dbReference>
<dbReference type="GO" id="GO:0005829">
    <property type="term" value="C:cytosol"/>
    <property type="evidence" value="ECO:0007669"/>
    <property type="project" value="TreeGrafter"/>
</dbReference>
<dbReference type="GO" id="GO:1990904">
    <property type="term" value="C:ribonucleoprotein complex"/>
    <property type="evidence" value="ECO:0007669"/>
    <property type="project" value="TreeGrafter"/>
</dbReference>
<dbReference type="GO" id="GO:0005525">
    <property type="term" value="F:GTP binding"/>
    <property type="evidence" value="ECO:0007669"/>
    <property type="project" value="UniProtKB-KW"/>
</dbReference>
<dbReference type="GO" id="GO:0003924">
    <property type="term" value="F:GTPase activity"/>
    <property type="evidence" value="ECO:0007669"/>
    <property type="project" value="InterPro"/>
</dbReference>
<dbReference type="GO" id="GO:0043022">
    <property type="term" value="F:ribosome binding"/>
    <property type="evidence" value="ECO:0007669"/>
    <property type="project" value="TreeGrafter"/>
</dbReference>
<dbReference type="GO" id="GO:0003746">
    <property type="term" value="F:translation elongation factor activity"/>
    <property type="evidence" value="ECO:0007669"/>
    <property type="project" value="UniProtKB-KW"/>
</dbReference>
<dbReference type="CDD" id="cd01681">
    <property type="entry name" value="aeEF2_snRNP_like_IV"/>
    <property type="match status" value="1"/>
</dbReference>
<dbReference type="CDD" id="cd04096">
    <property type="entry name" value="eEF2_snRNP_like_C"/>
    <property type="match status" value="1"/>
</dbReference>
<dbReference type="CDD" id="cd01885">
    <property type="entry name" value="EF2"/>
    <property type="match status" value="1"/>
</dbReference>
<dbReference type="CDD" id="cd16261">
    <property type="entry name" value="EF2_snRNP_III"/>
    <property type="match status" value="1"/>
</dbReference>
<dbReference type="CDD" id="cd03700">
    <property type="entry name" value="EF2_snRNP_like_II"/>
    <property type="match status" value="1"/>
</dbReference>
<dbReference type="FunFam" id="2.40.30.10:FF:000010">
    <property type="entry name" value="Translation elongation factor 2"/>
    <property type="match status" value="1"/>
</dbReference>
<dbReference type="FunFam" id="3.30.230.10:FF:000006">
    <property type="entry name" value="Translation elongation factor 2"/>
    <property type="match status" value="1"/>
</dbReference>
<dbReference type="FunFam" id="3.30.70.240:FF:000003">
    <property type="entry name" value="Translation elongation factor 2"/>
    <property type="match status" value="1"/>
</dbReference>
<dbReference type="FunFam" id="3.30.70.870:FF:000002">
    <property type="entry name" value="Translation elongation factor 2"/>
    <property type="match status" value="1"/>
</dbReference>
<dbReference type="FunFam" id="3.40.50.300:FF:000058">
    <property type="entry name" value="Translation elongation factor 2"/>
    <property type="match status" value="1"/>
</dbReference>
<dbReference type="Gene3D" id="3.30.230.10">
    <property type="match status" value="1"/>
</dbReference>
<dbReference type="Gene3D" id="3.30.70.240">
    <property type="match status" value="1"/>
</dbReference>
<dbReference type="Gene3D" id="3.30.70.870">
    <property type="entry name" value="Elongation Factor G (Translational Gtpase), domain 3"/>
    <property type="match status" value="1"/>
</dbReference>
<dbReference type="Gene3D" id="3.40.50.300">
    <property type="entry name" value="P-loop containing nucleotide triphosphate hydrolases"/>
    <property type="match status" value="1"/>
</dbReference>
<dbReference type="Gene3D" id="2.40.30.10">
    <property type="entry name" value="Translation factors"/>
    <property type="match status" value="1"/>
</dbReference>
<dbReference type="InterPro" id="IPR041095">
    <property type="entry name" value="EFG_II"/>
</dbReference>
<dbReference type="InterPro" id="IPR035647">
    <property type="entry name" value="EFG_III/V"/>
</dbReference>
<dbReference type="InterPro" id="IPR000640">
    <property type="entry name" value="EFG_V-like"/>
</dbReference>
<dbReference type="InterPro" id="IPR004161">
    <property type="entry name" value="EFTu-like_2"/>
</dbReference>
<dbReference type="InterPro" id="IPR031157">
    <property type="entry name" value="G_TR_CS"/>
</dbReference>
<dbReference type="InterPro" id="IPR027417">
    <property type="entry name" value="P-loop_NTPase"/>
</dbReference>
<dbReference type="InterPro" id="IPR020568">
    <property type="entry name" value="Ribosomal_Su5_D2-typ_SF"/>
</dbReference>
<dbReference type="InterPro" id="IPR014721">
    <property type="entry name" value="Ribsml_uS5_D2-typ_fold_subgr"/>
</dbReference>
<dbReference type="InterPro" id="IPR005225">
    <property type="entry name" value="Small_GTP-bd"/>
</dbReference>
<dbReference type="InterPro" id="IPR000795">
    <property type="entry name" value="T_Tr_GTP-bd_dom"/>
</dbReference>
<dbReference type="InterPro" id="IPR009000">
    <property type="entry name" value="Transl_B-barrel_sf"/>
</dbReference>
<dbReference type="InterPro" id="IPR005517">
    <property type="entry name" value="Transl_elong_EFG/EF2_IV"/>
</dbReference>
<dbReference type="NCBIfam" id="TIGR00231">
    <property type="entry name" value="small_GTP"/>
    <property type="match status" value="1"/>
</dbReference>
<dbReference type="PANTHER" id="PTHR42908:SF10">
    <property type="entry name" value="EUKARYOTIC TRANSLATION ELONGATION FACTOR 2"/>
    <property type="match status" value="1"/>
</dbReference>
<dbReference type="PANTHER" id="PTHR42908">
    <property type="entry name" value="TRANSLATION ELONGATION FACTOR-RELATED"/>
    <property type="match status" value="1"/>
</dbReference>
<dbReference type="Pfam" id="PF00679">
    <property type="entry name" value="EFG_C"/>
    <property type="match status" value="1"/>
</dbReference>
<dbReference type="Pfam" id="PF14492">
    <property type="entry name" value="EFG_III"/>
    <property type="match status" value="1"/>
</dbReference>
<dbReference type="Pfam" id="PF03764">
    <property type="entry name" value="EFG_IV"/>
    <property type="match status" value="1"/>
</dbReference>
<dbReference type="Pfam" id="PF00009">
    <property type="entry name" value="GTP_EFTU"/>
    <property type="match status" value="1"/>
</dbReference>
<dbReference type="Pfam" id="PF03144">
    <property type="entry name" value="GTP_EFTU_D2"/>
    <property type="match status" value="1"/>
</dbReference>
<dbReference type="PRINTS" id="PR00315">
    <property type="entry name" value="ELONGATNFCT"/>
</dbReference>
<dbReference type="SMART" id="SM00838">
    <property type="entry name" value="EFG_C"/>
    <property type="match status" value="1"/>
</dbReference>
<dbReference type="SMART" id="SM00889">
    <property type="entry name" value="EFG_IV"/>
    <property type="match status" value="1"/>
</dbReference>
<dbReference type="SUPFAM" id="SSF54980">
    <property type="entry name" value="EF-G C-terminal domain-like"/>
    <property type="match status" value="2"/>
</dbReference>
<dbReference type="SUPFAM" id="SSF52540">
    <property type="entry name" value="P-loop containing nucleoside triphosphate hydrolases"/>
    <property type="match status" value="1"/>
</dbReference>
<dbReference type="SUPFAM" id="SSF54211">
    <property type="entry name" value="Ribosomal protein S5 domain 2-like"/>
    <property type="match status" value="1"/>
</dbReference>
<dbReference type="SUPFAM" id="SSF50447">
    <property type="entry name" value="Translation proteins"/>
    <property type="match status" value="1"/>
</dbReference>
<dbReference type="PROSITE" id="PS00301">
    <property type="entry name" value="G_TR_1"/>
    <property type="match status" value="1"/>
</dbReference>
<dbReference type="PROSITE" id="PS51722">
    <property type="entry name" value="G_TR_2"/>
    <property type="match status" value="1"/>
</dbReference>